<comment type="function">
    <text>Probable ATPase of unknown function. Its presence in a non-photosynthetic plant (Epifagus virginiana) and experiments in tobacco indicate that it has an essential function which is probably not related to photosynthesis.</text>
</comment>
<comment type="subcellular location">
    <subcellularLocation>
        <location evidence="1">Plastid</location>
        <location evidence="1">Chloroplast stroma</location>
    </subcellularLocation>
</comment>
<comment type="similarity">
    <text evidence="1">Belongs to the Ycf2 family.</text>
</comment>
<evidence type="ECO:0000255" key="1">
    <source>
        <dbReference type="HAMAP-Rule" id="MF_01330"/>
    </source>
</evidence>
<feature type="chain" id="PRO_0000276556" description="Protein Ycf2">
    <location>
        <begin position="1"/>
        <end position="2282"/>
    </location>
</feature>
<feature type="binding site" evidence="1">
    <location>
        <begin position="1635"/>
        <end position="1642"/>
    </location>
    <ligand>
        <name>ATP</name>
        <dbReference type="ChEBI" id="CHEBI:30616"/>
    </ligand>
</feature>
<proteinExistence type="inferred from homology"/>
<protein>
    <recommendedName>
        <fullName evidence="1">Protein Ycf2</fullName>
    </recommendedName>
</protein>
<geneLocation type="chloroplast"/>
<name>YCF2_POPAL</name>
<keyword id="KW-0067">ATP-binding</keyword>
<keyword id="KW-0150">Chloroplast</keyword>
<keyword id="KW-0547">Nucleotide-binding</keyword>
<keyword id="KW-0934">Plastid</keyword>
<accession>Q14F97</accession>
<sequence length="2282" mass="267830">MKGHQFKSWIFELREILREIKNSHYFLDSWTQFNSVGSFIHIFFHQERFIKLLDSRIWSILFSRNSQGSTSNRYFTIKGVVLFVVVVLIYRINNRKMVERKNLYLTGLLPIPMNSIGPRNDTLEESFGSSNINRLIVSLLYLPKGKKISESRFLDPKESTWVLPITKKCIMSESNWGSRWWRNWIGKKRDSSCKISNETVAGIEISFKEKDIKYLEFLFVYYMDDPIRKDHDWELFDRLSPRKGRNIINLNSGQLFEILVKDWICYLMFAFREKIPIEVEGFFKQQGAGSTIQSNDIEHVSHLFSRKKWAISLQNCAQFHMWQFRQDLFVSWGNNPHESDFLRNISRENWIWLDNVWLVNKDRFFSKARNISSNIQYDSTRSSFLQGRDSSQLKGSSDQSRDHFDSISNEDSEYHTLINQREIQQLKERSILWDPSFLQTERTEIESDRFPKCLSGYSSMSRLFTEGAKEMNNHLLPEEIEEFLGNPTRSIRSFFSDRWSELHLGSNPTERSTRDQKLLKKEQDVSFVPSRRSENKEIVNIFKTITYLQNTVSIHPISSDPGCDMVLKDELDMDSSNKISFLNKNPFFDLFHLFHDRNGGGYTLHHDFESEERFQEMADLFTLSITEPDLVYHKGFAFFIDSYGLDQKQFLNEVFNSRDESKKKSLLVLPPIFYEENESFYRRIRKKWVRISCGNDLEDPKQKRVVFASNNIMEAVNQYGLIRNLIQIQYSTYGYIRNVLNQFFLMNRSDRNFEYGIQKDQIGNDTLNHRTLMKYTINQHLSNLKQSQKKWFDPLIFLSRTERSMNWDPNSYRYKWSNGSNNFQEHFISEQKSRFLFQVVFDRLRINQYSIDWSEVIDKKDLSKSLPFFLSKLLLFLSKFILFLSNSLPFFFVSFGNIPIHRSEIHIYELKGPNDQLCNQLLEPIGLQIVHLKKWKPFLLDDHDTSQKSKFLINGGTISPFLFNKIPKWMIDSFHTRNNRRKSFDNTDSSFSMISHDQDNWLNPVKPFHRSSLISSFYKANRLRFLNNLHHFCFYCNKRFPFYVEKARIKNYDFTYGQFLNILFIRNKIFSLCGGKKKHAFLERDTISPIESQVSNIFIPNDFPQSGDESLYKSFHFPIRPDPFVRRAIYSIADVSGTPLTEGQIFNFERTYCQPLSDINLSDSEGKNLHQYLNFNSNMGLIHTPCSEKYLPSEKRKKRSLCLKKCVEKGQMYRTFQGDSAFSTLSKWNLFQTYMPWFLTSTGYKYLNLIFLDTFSDHLLPILSSSQKIVSIFHDIMHGSDISWRILQKNLWKTQWNLISEISSKCLHNLLLSEEMIHRNNEPPLISTRLRSPNVREFLYSILFLLLVAGYLVRTHLLFVSRAYSELQTEFEKVKSLMIPSYMIELRKLLDRYPTSELNSFWLKNLFLVALEQLGDLLEEIRGSASGGNMLWGGGPAYGVKSIRSKKKFLNINLIDLISIIPNPINRITFSRNTRHLSHTSKEIYSLIRKRKNVNGDWIDDKIESLVANSDSIDDKEREFLVQFSTLTTEKRIDQILLSLTHSDHLSKNDSGYQMIEEPGAIYLRYLVDIHKKYLMNYEFNTPCLAERRIFLAHYQTITYSQTSCGANSFHFPSHGKPFSLRLALSPSRGILVIGSIGTGRSYLVKYLATNSYVPFITVFLNKFLDNKPKGFLIDDRDDIDDSDDIDVSDDIDRDLDTELELLTRMNVLTMDMMPEIDRFYITLQFELAKAMSPCIIWIPNIHDLDVNESNYLSLGLLVNYLSRDCERCSTRNILVIASTHIPQKVDPALIAPNKLNTCIKIRRLLIPQQRKHVFTLSYSRGFHLEKKMFHTKRFGSVTMGSNVRDLVALTNEALSISITQKKSIIDTNIIRSALHRQTWDLRSQVRSVQDHGILFYQIGRAVAQNVFLSNCPIDPISIYMKKKSCNEGDSYLYKWYFELGTSMKKLTILLYLLSCSAGSIAQDLWSLPGPDEKNGITYYGLVENDSDLVHGLLEVEGALVGSSRTEKDCSQFDNDRVTLLLRPEPRSPLDMMQNGSCSILDQRFLYEKYESEFEEGEVEGILDPQQIEEDLFNHIVWAPRIWSPWGFLFDCIERPNSLGFPYWARSFRGKRIIYDEEDELQENDSEFLQSGTMQYQIRDRSSKEQGVFRISQFIWDPADPLFFLFKDQPLVSVFSHREFFADEEMSKGLLTSQTDPPTSIYKRWFIKNTQEKHFELLIHRQRWLRTKSSLSNGFFRSNTLSESYQYLSNLFLSNGRLLDQMTKALLRKRWLFPDEMKIGFM</sequence>
<reference key="1">
    <citation type="submission" date="2005-03" db="EMBL/GenBank/DDBJ databases">
        <title>Complete structure of the chloroplast genome of Populus alba.</title>
        <authorList>
            <person name="Okumura S."/>
            <person name="Yamashita A."/>
            <person name="Kanamoto H."/>
            <person name="Hattori M."/>
            <person name="Takase H."/>
            <person name="Tomizawa K."/>
        </authorList>
    </citation>
    <scope>NUCLEOTIDE SEQUENCE [LARGE SCALE GENOMIC DNA]</scope>
</reference>
<organism>
    <name type="scientific">Populus alba</name>
    <name type="common">White poplar</name>
    <dbReference type="NCBI Taxonomy" id="43335"/>
    <lineage>
        <taxon>Eukaryota</taxon>
        <taxon>Viridiplantae</taxon>
        <taxon>Streptophyta</taxon>
        <taxon>Embryophyta</taxon>
        <taxon>Tracheophyta</taxon>
        <taxon>Spermatophyta</taxon>
        <taxon>Magnoliopsida</taxon>
        <taxon>eudicotyledons</taxon>
        <taxon>Gunneridae</taxon>
        <taxon>Pentapetalae</taxon>
        <taxon>rosids</taxon>
        <taxon>fabids</taxon>
        <taxon>Malpighiales</taxon>
        <taxon>Salicaceae</taxon>
        <taxon>Saliceae</taxon>
        <taxon>Populus</taxon>
    </lineage>
</organism>
<dbReference type="EMBL" id="AP008956">
    <property type="protein sequence ID" value="BAE97248.1"/>
    <property type="molecule type" value="Genomic_DNA"/>
</dbReference>
<dbReference type="EMBL" id="AP008956">
    <property type="protein sequence ID" value="BAE97265.1"/>
    <property type="molecule type" value="Genomic_DNA"/>
</dbReference>
<dbReference type="KEGG" id="palz:4178201"/>
<dbReference type="KEGG" id="palz:4178202"/>
<dbReference type="OrthoDB" id="8966at3646"/>
<dbReference type="GO" id="GO:0009570">
    <property type="term" value="C:chloroplast stroma"/>
    <property type="evidence" value="ECO:0007669"/>
    <property type="project" value="UniProtKB-SubCell"/>
</dbReference>
<dbReference type="GO" id="GO:0005524">
    <property type="term" value="F:ATP binding"/>
    <property type="evidence" value="ECO:0007669"/>
    <property type="project" value="UniProtKB-KW"/>
</dbReference>
<dbReference type="GO" id="GO:0016887">
    <property type="term" value="F:ATP hydrolysis activity"/>
    <property type="evidence" value="ECO:0007669"/>
    <property type="project" value="InterPro"/>
</dbReference>
<dbReference type="CDD" id="cd19505">
    <property type="entry name" value="RecA-like_Ycf2"/>
    <property type="match status" value="1"/>
</dbReference>
<dbReference type="Gene3D" id="3.40.50.300">
    <property type="entry name" value="P-loop containing nucleotide triphosphate hydrolases"/>
    <property type="match status" value="1"/>
</dbReference>
<dbReference type="HAMAP" id="MF_01330">
    <property type="entry name" value="Ycf2"/>
    <property type="match status" value="1"/>
</dbReference>
<dbReference type="InterPro" id="IPR003593">
    <property type="entry name" value="AAA+_ATPase"/>
</dbReference>
<dbReference type="InterPro" id="IPR003959">
    <property type="entry name" value="ATPase_AAA_core"/>
</dbReference>
<dbReference type="InterPro" id="IPR027417">
    <property type="entry name" value="P-loop_NTPase"/>
</dbReference>
<dbReference type="InterPro" id="IPR008543">
    <property type="entry name" value="Uncharacterised_Ycf2"/>
</dbReference>
<dbReference type="InterPro" id="IPR056777">
    <property type="entry name" value="Ycf2_N"/>
</dbReference>
<dbReference type="PANTHER" id="PTHR33078:SF51">
    <property type="entry name" value="PROTEIN TIC 214"/>
    <property type="match status" value="1"/>
</dbReference>
<dbReference type="PANTHER" id="PTHR33078">
    <property type="entry name" value="PROTEIN YCF2-RELATED"/>
    <property type="match status" value="1"/>
</dbReference>
<dbReference type="Pfam" id="PF00004">
    <property type="entry name" value="AAA"/>
    <property type="match status" value="1"/>
</dbReference>
<dbReference type="Pfam" id="PF05695">
    <property type="entry name" value="Ycf2"/>
    <property type="match status" value="1"/>
</dbReference>
<dbReference type="SMART" id="SM00382">
    <property type="entry name" value="AAA"/>
    <property type="match status" value="1"/>
</dbReference>
<dbReference type="SUPFAM" id="SSF52540">
    <property type="entry name" value="P-loop containing nucleoside triphosphate hydrolases"/>
    <property type="match status" value="1"/>
</dbReference>
<gene>
    <name evidence="1" type="primary">ycf2-A</name>
</gene>
<gene>
    <name evidence="1" type="primary">ycf2-B</name>
</gene>